<organism>
    <name type="scientific">Caenorhabditis elegans</name>
    <dbReference type="NCBI Taxonomy" id="6239"/>
    <lineage>
        <taxon>Eukaryota</taxon>
        <taxon>Metazoa</taxon>
        <taxon>Ecdysozoa</taxon>
        <taxon>Nematoda</taxon>
        <taxon>Chromadorea</taxon>
        <taxon>Rhabditida</taxon>
        <taxon>Rhabditina</taxon>
        <taxon>Rhabditomorpha</taxon>
        <taxon>Rhabditoidea</taxon>
        <taxon>Rhabditidae</taxon>
        <taxon>Peloderinae</taxon>
        <taxon>Caenorhabditis</taxon>
    </lineage>
</organism>
<proteinExistence type="evidence at transcript level"/>
<keyword id="KW-0217">Developmental protein</keyword>
<keyword id="KW-0221">Differentiation</keyword>
<keyword id="KW-0238">DNA-binding</keyword>
<keyword id="KW-0479">Metal-binding</keyword>
<keyword id="KW-1185">Reference proteome</keyword>
<keyword id="KW-0677">Repeat</keyword>
<keyword id="KW-0726">Sexual differentiation</keyword>
<keyword id="KW-0862">Zinc</keyword>
<keyword id="KW-0863">Zinc-finger</keyword>
<reference evidence="8 9" key="1">
    <citation type="journal article" date="1994" name="Genetics">
        <title>The Caenorhabditis elegans locus lin-15, a negative regulator of a tyrosine kinase signaling pathway, encodes two different proteins.</title>
        <authorList>
            <person name="Clark S.G."/>
            <person name="Lu X."/>
            <person name="Horvitz H.R."/>
        </authorList>
    </citation>
    <scope>NUCLEOTIDE SEQUENCE [GENOMIC DNA / MRNA]</scope>
    <scope>FUNCTION</scope>
    <source>
        <strain evidence="9">Bristol N2</strain>
    </source>
</reference>
<reference evidence="8 10" key="2">
    <citation type="journal article" date="1994" name="Mol. Biol. Cell">
        <title>The lin-15 locus encodes two negative regulators of Caenorhabditis elegans vulval development.</title>
        <authorList>
            <person name="Huang L.S."/>
            <person name="Tzou P."/>
            <person name="Sternberg P.W."/>
        </authorList>
    </citation>
    <scope>NUCLEOTIDE SEQUENCE [GENOMIC DNA]</scope>
    <scope>FUNCTION</scope>
    <source>
        <strain evidence="10">Bristol N2</strain>
    </source>
</reference>
<reference evidence="11" key="3">
    <citation type="journal article" date="1998" name="Science">
        <title>Genome sequence of the nematode C. elegans: a platform for investigating biology.</title>
        <authorList>
            <consortium name="The C. elegans sequencing consortium"/>
        </authorList>
    </citation>
    <scope>NUCLEOTIDE SEQUENCE [LARGE SCALE GENOMIC DNA]</scope>
    <source>
        <strain>Bristol N2</strain>
    </source>
</reference>
<reference key="4">
    <citation type="journal article" date="2001" name="Mol. Cell">
        <title>dpl-1 DP and efl-1 E2F act with lin-35 Rb to antagonize Ras signaling in C.elegans vulval development.</title>
        <authorList>
            <person name="Ceol C.J."/>
            <person name="Horvitz H.R."/>
        </authorList>
    </citation>
    <scope>FUNCTION</scope>
    <scope>DISRUPTION PHENOTYPE</scope>
</reference>
<reference key="5">
    <citation type="journal article" date="2007" name="Genetics">
        <title>DPL-1 DP, LIN-35 Rb and EFL-1 E2F act with the MCD-1 zinc-finger protein to promote programmed cell death in Caenorhabditis elegans.</title>
        <authorList>
            <person name="Reddien P.W."/>
            <person name="Andersen E.C."/>
            <person name="Huang M.C."/>
            <person name="Horvitz H.R."/>
        </authorList>
    </citation>
    <scope>DISRUPTION PHENOTYPE</scope>
</reference>
<name>LI15B_CAEEL</name>
<evidence type="ECO:0000255" key="1"/>
<evidence type="ECO:0000255" key="2">
    <source>
        <dbReference type="PROSITE-ProRule" id="PRU00309"/>
    </source>
</evidence>
<evidence type="ECO:0000256" key="3">
    <source>
        <dbReference type="SAM" id="MobiDB-lite"/>
    </source>
</evidence>
<evidence type="ECO:0000269" key="4">
    <source>
    </source>
</evidence>
<evidence type="ECO:0000269" key="5">
    <source>
    </source>
</evidence>
<evidence type="ECO:0000269" key="6">
    <source>
    </source>
</evidence>
<evidence type="ECO:0000269" key="7">
    <source>
    </source>
</evidence>
<evidence type="ECO:0000305" key="8"/>
<evidence type="ECO:0000312" key="9">
    <source>
        <dbReference type="EMBL" id="AAA20089.1"/>
    </source>
</evidence>
<evidence type="ECO:0000312" key="10">
    <source>
        <dbReference type="EMBL" id="CAA82854.1"/>
    </source>
</evidence>
<evidence type="ECO:0000312" key="11">
    <source>
        <dbReference type="EMBL" id="CAB01901.1"/>
    </source>
</evidence>
<evidence type="ECO:0000312" key="12">
    <source>
        <dbReference type="WormBase" id="ZK662.4"/>
    </source>
</evidence>
<gene>
    <name evidence="12" type="primary">lin-15B</name>
    <name evidence="12" type="ORF">ZK662.4</name>
</gene>
<comment type="function">
    <text evidence="4 6 7">Synthetic multivulva (synMuv) class B protein (PubMed:7982579, PubMed:8054684). SynMuv proteins are required to repress the induction of vulval development (PubMed:11463372, PubMed:7982579, PubMed:8054684). Acts redundantly with SynMuv class A protein lin-15A to negatively regulate vulval development (PubMed:8054684). Regulates let-23 basal activity (PubMed:8054684).</text>
</comment>
<comment type="disruption phenotype">
    <text evidence="4 5 7">No obvious vulval development defects (PubMed:11463372, PubMed:8054684). Double knockout with the synthetic multivulva class A protein lin-15A results in a multiple vulva (Muv) phenotype (PubMed:8054684). Double knockout with the programmed cell death regulator mcd-1 results in 100% lethality during the L1 stage of larval development (PubMed:17237514).</text>
</comment>
<comment type="miscellaneous">
    <text>The proteins lin-15A and lin-15B are produced from a single precursor mRNA with non-overlapping transcripts where lin-15B is the upstream transcript and lin-15A is the downstream one. The precursor mRNA is cleaved at the polyadenylation site and a 22-nucleotide SL2 leader sequence is trans-spliced to the 5'-end of lin-15A to allow its translation.</text>
</comment>
<protein>
    <recommendedName>
        <fullName>Protein lin-15B</fullName>
    </recommendedName>
    <alternativeName>
        <fullName>Abnormal cell lineage protein 15B</fullName>
    </alternativeName>
</protein>
<sequence length="1440" mass="163594">MQTLKTARLTSNPASIPTSSSSSAISAAAIQKTLDAVNRPPAVRASGILRHRTLPAPTQETAHHLDADPKTTELMARFFISQGIPFECAHEPAFLELMKHVDPNCVIPPTNVTKKLVDKISTSSKPQVNYTKTVGPLSVTIDICGDEDEKYLAFSIHYFEDLYERKNAIYLRKLLLTELDSNSLLTNIRRSVNSYSFSNVKFTNIVCPNEEICKLVEESAVVKRYNVCFYNYVTRFVADLMEIEEFSSGLTQLRTFVRYMKQNSDMYSKFRRMQLQKNAELDIPSIDSGDWHSTAIFLTRCLVWHDTFTEFCGKLDILHYIDNETFNHLIYLQRLLQQCMKHCRELSIPNNSISQVVPAIMSIRNFIASNSMGYRFQKRIRDSFTTSFKEITSGPSQDRYDIATLLDPRFAYRDTVYTAQTWRSLEKKVIDDFVNSDLQNDKNFYQDISILNQEQRYDIIKKEFAYYRQTSFVERPEENENSNHWWGMRQTDMEFLAVIAREYLASPAVSIDAGYYFGNGGKFQHICHTYSHQRLENCLALAGNYQTFRGKGASVDVISQSMIETLNNTASRLQKQVHLGLYAHGVDNISSDRDVQSIVGHHYPPMPTVANYDIPHVPKEEEKPPVANLQSTSSPATSSPTIIRPRAAPPPRTLAQGRPIPLNGKELKAVPIRQIPLQVRPLPPRPANVPIVPRPTVPQQFIKAPAPKPITLQAVVCSIPEKEIKKETEDVALLEKIKDEPLDEDDFNHPSTDPVPNRTTASSQGPSSYPRKIVVLASKLPTSQSSSPSTATSAQARSHVTTAQLIRCGPSEGTVPQKIHSHNFVQKFAQKQNFVHKYALNSQDHTGRLNQTVPMRAALRLPNSEQKSGAPSSINGKVQRDDFKLEPLDDFNGEPDYDNLIGAQRLMYSDNLNDASAEDAFARHRVTMEFQKRRACNRRCAVCGHLEIHERLKNVTIENEKLLIMLGCIYRGEFTLGQAQLFMARESKTYICRLHFLETLDEIYQMLRLKSADDILICPLDLIQNALITVSALRPHIIASQLRKILHDFAERNNHLRETPAELKKLGQQYFDYREPEPEPERNDVDEQEIIPKLFRQPRKQVLEADQHDGTVKVIEQEDFKLPTVKPSENEECDNPGVCCFCSKRGDRGGMLRVPRSEERLARWVDKLGPEFEARLHTNTENLICRSHFPDAAFSSRGRLLKGMIPDAAPEKVETTYIIQGNNFLKLKERKSGTDKNSAIDLANMLNPDGVEYTQEEEEEEEYEEMSRSPTEETSDDEPSQAAVYNNAPVIKRTYRKRELSNEDGPLNLVTPPAHTPNPRGRPRKYPKNSVTPEAEKSLTDYDYNPGTSQRRALKKGYVQLEDGEIVGEDCEYVPEKTPSGRLIRQAVARRSFAFADEEEEEEEYEESPIVKKPKIAGRPVGRPRKDANKLPTPTPPSNE</sequence>
<feature type="chain" id="PRO_0000260044" description="Protein lin-15B">
    <location>
        <begin position="1"/>
        <end position="1440"/>
    </location>
</feature>
<feature type="zinc finger region" description="THAP-type" evidence="2">
    <location>
        <begin position="1135"/>
        <end position="1209"/>
    </location>
</feature>
<feature type="DNA-binding region" description="A.T hook 1" evidence="1">
    <location>
        <begin position="1317"/>
        <end position="1329"/>
    </location>
</feature>
<feature type="DNA-binding region" description="A.T hook 2" evidence="1">
    <location>
        <begin position="1418"/>
        <end position="1430"/>
    </location>
</feature>
<feature type="region of interest" description="Disordered" evidence="3">
    <location>
        <begin position="1"/>
        <end position="22"/>
    </location>
</feature>
<feature type="region of interest" description="Disordered" evidence="3">
    <location>
        <begin position="48"/>
        <end position="67"/>
    </location>
</feature>
<feature type="region of interest" description="Disordered" evidence="3">
    <location>
        <begin position="618"/>
        <end position="660"/>
    </location>
</feature>
<feature type="region of interest" description="Disordered" evidence="3">
    <location>
        <begin position="738"/>
        <end position="769"/>
    </location>
</feature>
<feature type="region of interest" description="Disordered" evidence="3">
    <location>
        <begin position="1239"/>
        <end position="1281"/>
    </location>
</feature>
<feature type="region of interest" description="Disordered" evidence="3">
    <location>
        <begin position="1298"/>
        <end position="1350"/>
    </location>
</feature>
<feature type="region of interest" description="Disordered" evidence="3">
    <location>
        <begin position="1395"/>
        <end position="1440"/>
    </location>
</feature>
<feature type="compositionally biased region" description="Low complexity" evidence="3">
    <location>
        <begin position="10"/>
        <end position="22"/>
    </location>
</feature>
<feature type="compositionally biased region" description="Low complexity" evidence="3">
    <location>
        <begin position="631"/>
        <end position="646"/>
    </location>
</feature>
<feature type="compositionally biased region" description="Polar residues" evidence="3">
    <location>
        <begin position="757"/>
        <end position="767"/>
    </location>
</feature>
<feature type="compositionally biased region" description="Acidic residues" evidence="3">
    <location>
        <begin position="1254"/>
        <end position="1264"/>
    </location>
</feature>
<feature type="compositionally biased region" description="Acidic residues" evidence="3">
    <location>
        <begin position="1396"/>
        <end position="1407"/>
    </location>
</feature>
<dbReference type="EMBL" id="U10412">
    <property type="protein sequence ID" value="AAA20088.1"/>
    <property type="molecule type" value="mRNA"/>
</dbReference>
<dbReference type="EMBL" id="U10413">
    <property type="protein sequence ID" value="AAA20089.1"/>
    <property type="molecule type" value="Genomic_DNA"/>
</dbReference>
<dbReference type="EMBL" id="Z29967">
    <property type="protein sequence ID" value="CAA82854.1"/>
    <property type="molecule type" value="Genomic_DNA"/>
</dbReference>
<dbReference type="EMBL" id="Z79604">
    <property type="protein sequence ID" value="CAB01901.1"/>
    <property type="molecule type" value="Genomic_DNA"/>
</dbReference>
<dbReference type="EMBL" id="Z79605">
    <property type="protein sequence ID" value="CAB01901.1"/>
    <property type="status" value="JOINED"/>
    <property type="molecule type" value="Genomic_DNA"/>
</dbReference>
<dbReference type="PIR" id="T27942">
    <property type="entry name" value="T27942"/>
</dbReference>
<dbReference type="RefSeq" id="NP_510587.1">
    <property type="nucleotide sequence ID" value="NM_078186.7"/>
</dbReference>
<dbReference type="BioGRID" id="46554">
    <property type="interactions" value="18"/>
</dbReference>
<dbReference type="FunCoup" id="Q27395">
    <property type="interactions" value="1374"/>
</dbReference>
<dbReference type="STRING" id="6239.ZK662.4.2"/>
<dbReference type="iPTMnet" id="Q27395"/>
<dbReference type="PaxDb" id="6239-ZK662.4.1"/>
<dbReference type="PeptideAtlas" id="Q27395"/>
<dbReference type="EnsemblMetazoa" id="ZK662.4.1">
    <property type="protein sequence ID" value="ZK662.4.1"/>
    <property type="gene ID" value="WBGene00023497"/>
</dbReference>
<dbReference type="EnsemblMetazoa" id="ZK662.4.2">
    <property type="protein sequence ID" value="ZK662.4.2"/>
    <property type="gene ID" value="WBGene00023497"/>
</dbReference>
<dbReference type="GeneID" id="181662"/>
<dbReference type="KEGG" id="cel:CELE_ZK662.4"/>
<dbReference type="UCSC" id="ZK662.4.2">
    <property type="organism name" value="c. elegans"/>
</dbReference>
<dbReference type="AGR" id="WB:WBGene00023497"/>
<dbReference type="CTD" id="181662"/>
<dbReference type="WormBase" id="ZK662.4">
    <property type="protein sequence ID" value="CE15381"/>
    <property type="gene ID" value="WBGene00023497"/>
    <property type="gene designation" value="lin-15B"/>
</dbReference>
<dbReference type="eggNOG" id="KOG1121">
    <property type="taxonomic scope" value="Eukaryota"/>
</dbReference>
<dbReference type="GeneTree" id="ENSGT00390000009480"/>
<dbReference type="HOGENOM" id="CLU_004462_0_0_1"/>
<dbReference type="InParanoid" id="Q27395"/>
<dbReference type="OMA" id="VCCYCSK"/>
<dbReference type="OrthoDB" id="5841281at2759"/>
<dbReference type="PRO" id="PR:Q27395"/>
<dbReference type="Proteomes" id="UP000001940">
    <property type="component" value="Chromosome X"/>
</dbReference>
<dbReference type="Bgee" id="WBGene00023497">
    <property type="expression patterns" value="Expressed in embryo and 4 other cell types or tissues"/>
</dbReference>
<dbReference type="GO" id="GO:0005634">
    <property type="term" value="C:nucleus"/>
    <property type="evidence" value="ECO:0000303"/>
    <property type="project" value="WormBase"/>
</dbReference>
<dbReference type="GO" id="GO:0003677">
    <property type="term" value="F:DNA binding"/>
    <property type="evidence" value="ECO:0007669"/>
    <property type="project" value="UniProtKB-KW"/>
</dbReference>
<dbReference type="GO" id="GO:0008270">
    <property type="term" value="F:zinc ion binding"/>
    <property type="evidence" value="ECO:0007669"/>
    <property type="project" value="UniProtKB-KW"/>
</dbReference>
<dbReference type="GO" id="GO:0030154">
    <property type="term" value="P:cell differentiation"/>
    <property type="evidence" value="ECO:0007669"/>
    <property type="project" value="UniProtKB-KW"/>
</dbReference>
<dbReference type="GO" id="GO:0046580">
    <property type="term" value="P:negative regulation of Ras protein signal transduction"/>
    <property type="evidence" value="ECO:0000315"/>
    <property type="project" value="UniProtKB"/>
</dbReference>
<dbReference type="GO" id="GO:0040027">
    <property type="term" value="P:negative regulation of vulval development"/>
    <property type="evidence" value="ECO:0000315"/>
    <property type="project" value="UniProtKB"/>
</dbReference>
<dbReference type="GO" id="GO:0042659">
    <property type="term" value="P:regulation of cell fate specification"/>
    <property type="evidence" value="ECO:0000315"/>
    <property type="project" value="WormBase"/>
</dbReference>
<dbReference type="GO" id="GO:0007548">
    <property type="term" value="P:sex differentiation"/>
    <property type="evidence" value="ECO:0007669"/>
    <property type="project" value="UniProtKB-KW"/>
</dbReference>
<dbReference type="InterPro" id="IPR040129">
    <property type="entry name" value="Lin-15B-like"/>
</dbReference>
<dbReference type="InterPro" id="IPR012337">
    <property type="entry name" value="RNaseH-like_sf"/>
</dbReference>
<dbReference type="InterPro" id="IPR006612">
    <property type="entry name" value="THAP_Znf"/>
</dbReference>
<dbReference type="PANTHER" id="PTHR22716:SF1">
    <property type="entry name" value="ETS CLASS TRANSCRIPTION FACTOR-RELATED"/>
    <property type="match status" value="1"/>
</dbReference>
<dbReference type="PANTHER" id="PTHR22716">
    <property type="entry name" value="ETS CLASS TRANSCRIPTION FACTOR-RELATED-RELATED"/>
    <property type="match status" value="1"/>
</dbReference>
<dbReference type="Pfam" id="PF25375">
    <property type="entry name" value="Lin-15B"/>
    <property type="match status" value="1"/>
</dbReference>
<dbReference type="SMART" id="SM00692">
    <property type="entry name" value="DM3"/>
    <property type="match status" value="1"/>
</dbReference>
<dbReference type="SMART" id="SM00980">
    <property type="entry name" value="THAP"/>
    <property type="match status" value="1"/>
</dbReference>
<dbReference type="SUPFAM" id="SSF53098">
    <property type="entry name" value="Ribonuclease H-like"/>
    <property type="match status" value="1"/>
</dbReference>
<dbReference type="PROSITE" id="PS50950">
    <property type="entry name" value="ZF_THAP"/>
    <property type="match status" value="1"/>
</dbReference>
<accession>Q27395</accession>
<accession>Q94409</accession>
<accession>Q94414</accession>